<gene>
    <name evidence="1" type="primary">guaC</name>
    <name type="ordered locus">STY0163</name>
    <name type="ordered locus">t0147</name>
</gene>
<organism>
    <name type="scientific">Salmonella typhi</name>
    <dbReference type="NCBI Taxonomy" id="90370"/>
    <lineage>
        <taxon>Bacteria</taxon>
        <taxon>Pseudomonadati</taxon>
        <taxon>Pseudomonadota</taxon>
        <taxon>Gammaproteobacteria</taxon>
        <taxon>Enterobacterales</taxon>
        <taxon>Enterobacteriaceae</taxon>
        <taxon>Salmonella</taxon>
    </lineage>
</organism>
<keyword id="KW-0479">Metal-binding</keyword>
<keyword id="KW-0521">NADP</keyword>
<keyword id="KW-0560">Oxidoreductase</keyword>
<keyword id="KW-0630">Potassium</keyword>
<proteinExistence type="inferred from homology"/>
<name>GUAC_SALTI</name>
<reference key="1">
    <citation type="journal article" date="2001" name="Nature">
        <title>Complete genome sequence of a multiple drug resistant Salmonella enterica serovar Typhi CT18.</title>
        <authorList>
            <person name="Parkhill J."/>
            <person name="Dougan G."/>
            <person name="James K.D."/>
            <person name="Thomson N.R."/>
            <person name="Pickard D."/>
            <person name="Wain J."/>
            <person name="Churcher C.M."/>
            <person name="Mungall K.L."/>
            <person name="Bentley S.D."/>
            <person name="Holden M.T.G."/>
            <person name="Sebaihia M."/>
            <person name="Baker S."/>
            <person name="Basham D."/>
            <person name="Brooks K."/>
            <person name="Chillingworth T."/>
            <person name="Connerton P."/>
            <person name="Cronin A."/>
            <person name="Davis P."/>
            <person name="Davies R.M."/>
            <person name="Dowd L."/>
            <person name="White N."/>
            <person name="Farrar J."/>
            <person name="Feltwell T."/>
            <person name="Hamlin N."/>
            <person name="Haque A."/>
            <person name="Hien T.T."/>
            <person name="Holroyd S."/>
            <person name="Jagels K."/>
            <person name="Krogh A."/>
            <person name="Larsen T.S."/>
            <person name="Leather S."/>
            <person name="Moule S."/>
            <person name="O'Gaora P."/>
            <person name="Parry C."/>
            <person name="Quail M.A."/>
            <person name="Rutherford K.M."/>
            <person name="Simmonds M."/>
            <person name="Skelton J."/>
            <person name="Stevens K."/>
            <person name="Whitehead S."/>
            <person name="Barrell B.G."/>
        </authorList>
    </citation>
    <scope>NUCLEOTIDE SEQUENCE [LARGE SCALE GENOMIC DNA]</scope>
    <source>
        <strain>CT18</strain>
    </source>
</reference>
<reference key="2">
    <citation type="journal article" date="2003" name="J. Bacteriol.">
        <title>Comparative genomics of Salmonella enterica serovar Typhi strains Ty2 and CT18.</title>
        <authorList>
            <person name="Deng W."/>
            <person name="Liou S.-R."/>
            <person name="Plunkett G. III"/>
            <person name="Mayhew G.F."/>
            <person name="Rose D.J."/>
            <person name="Burland V."/>
            <person name="Kodoyianni V."/>
            <person name="Schwartz D.C."/>
            <person name="Blattner F.R."/>
        </authorList>
    </citation>
    <scope>NUCLEOTIDE SEQUENCE [LARGE SCALE GENOMIC DNA]</scope>
    <source>
        <strain>ATCC 700931 / Ty2</strain>
    </source>
</reference>
<evidence type="ECO:0000255" key="1">
    <source>
        <dbReference type="HAMAP-Rule" id="MF_00596"/>
    </source>
</evidence>
<accession>Q8Z9F9</accession>
<feature type="chain" id="PRO_0000093738" description="GMP reductase">
    <location>
        <begin position="1"/>
        <end position="347"/>
    </location>
</feature>
<feature type="active site" description="Thioimidate intermediate" evidence="1">
    <location>
        <position position="186"/>
    </location>
</feature>
<feature type="binding site" evidence="1">
    <location>
        <begin position="108"/>
        <end position="131"/>
    </location>
    <ligand>
        <name>NADP(+)</name>
        <dbReference type="ChEBI" id="CHEBI:58349"/>
    </ligand>
</feature>
<feature type="binding site" evidence="1">
    <location>
        <position position="181"/>
    </location>
    <ligand>
        <name>K(+)</name>
        <dbReference type="ChEBI" id="CHEBI:29103"/>
    </ligand>
</feature>
<feature type="binding site" evidence="1">
    <location>
        <position position="183"/>
    </location>
    <ligand>
        <name>K(+)</name>
        <dbReference type="ChEBI" id="CHEBI:29103"/>
    </ligand>
</feature>
<feature type="binding site" evidence="1">
    <location>
        <begin position="216"/>
        <end position="239"/>
    </location>
    <ligand>
        <name>NADP(+)</name>
        <dbReference type="ChEBI" id="CHEBI:58349"/>
    </ligand>
</feature>
<dbReference type="EC" id="1.7.1.7" evidence="1"/>
<dbReference type="EMBL" id="AL513382">
    <property type="protein sequence ID" value="CAD01300.1"/>
    <property type="molecule type" value="Genomic_DNA"/>
</dbReference>
<dbReference type="EMBL" id="AE014613">
    <property type="protein sequence ID" value="AAO67879.1"/>
    <property type="molecule type" value="Genomic_DNA"/>
</dbReference>
<dbReference type="RefSeq" id="NP_454755.1">
    <property type="nucleotide sequence ID" value="NC_003198.1"/>
</dbReference>
<dbReference type="RefSeq" id="WP_001217357.1">
    <property type="nucleotide sequence ID" value="NZ_WSUR01000009.1"/>
</dbReference>
<dbReference type="SMR" id="Q8Z9F9"/>
<dbReference type="STRING" id="220341.gene:17584202"/>
<dbReference type="KEGG" id="stt:t0147"/>
<dbReference type="KEGG" id="sty:STY0163"/>
<dbReference type="PATRIC" id="fig|220341.7.peg.164"/>
<dbReference type="eggNOG" id="COG0516">
    <property type="taxonomic scope" value="Bacteria"/>
</dbReference>
<dbReference type="HOGENOM" id="CLU_022552_5_3_6"/>
<dbReference type="OMA" id="AYKEYFG"/>
<dbReference type="OrthoDB" id="9805398at2"/>
<dbReference type="Proteomes" id="UP000000541">
    <property type="component" value="Chromosome"/>
</dbReference>
<dbReference type="Proteomes" id="UP000002670">
    <property type="component" value="Chromosome"/>
</dbReference>
<dbReference type="GO" id="GO:0005829">
    <property type="term" value="C:cytosol"/>
    <property type="evidence" value="ECO:0007669"/>
    <property type="project" value="TreeGrafter"/>
</dbReference>
<dbReference type="GO" id="GO:1902560">
    <property type="term" value="C:GMP reductase complex"/>
    <property type="evidence" value="ECO:0007669"/>
    <property type="project" value="InterPro"/>
</dbReference>
<dbReference type="GO" id="GO:0003920">
    <property type="term" value="F:GMP reductase activity"/>
    <property type="evidence" value="ECO:0007669"/>
    <property type="project" value="UniProtKB-UniRule"/>
</dbReference>
<dbReference type="GO" id="GO:0046872">
    <property type="term" value="F:metal ion binding"/>
    <property type="evidence" value="ECO:0007669"/>
    <property type="project" value="UniProtKB-KW"/>
</dbReference>
<dbReference type="GO" id="GO:0006163">
    <property type="term" value="P:purine nucleotide metabolic process"/>
    <property type="evidence" value="ECO:0007669"/>
    <property type="project" value="UniProtKB-UniRule"/>
</dbReference>
<dbReference type="CDD" id="cd00381">
    <property type="entry name" value="IMPDH"/>
    <property type="match status" value="1"/>
</dbReference>
<dbReference type="FunFam" id="3.20.20.70:FF:000012">
    <property type="entry name" value="GMP reductase"/>
    <property type="match status" value="1"/>
</dbReference>
<dbReference type="Gene3D" id="3.20.20.70">
    <property type="entry name" value="Aldolase class I"/>
    <property type="match status" value="1"/>
</dbReference>
<dbReference type="HAMAP" id="MF_00596">
    <property type="entry name" value="GMP_reduct_type1"/>
    <property type="match status" value="1"/>
</dbReference>
<dbReference type="InterPro" id="IPR013785">
    <property type="entry name" value="Aldolase_TIM"/>
</dbReference>
<dbReference type="InterPro" id="IPR050139">
    <property type="entry name" value="GMP_reductase"/>
</dbReference>
<dbReference type="InterPro" id="IPR005993">
    <property type="entry name" value="GMPR"/>
</dbReference>
<dbReference type="InterPro" id="IPR015875">
    <property type="entry name" value="IMP_DH/GMP_Rdtase_CS"/>
</dbReference>
<dbReference type="InterPro" id="IPR001093">
    <property type="entry name" value="IMP_DH_GMPRt"/>
</dbReference>
<dbReference type="NCBIfam" id="TIGR01305">
    <property type="entry name" value="GMP_reduct_1"/>
    <property type="match status" value="1"/>
</dbReference>
<dbReference type="NCBIfam" id="NF003470">
    <property type="entry name" value="PRK05096.1"/>
    <property type="match status" value="1"/>
</dbReference>
<dbReference type="PANTHER" id="PTHR43170">
    <property type="entry name" value="GMP REDUCTASE"/>
    <property type="match status" value="1"/>
</dbReference>
<dbReference type="PANTHER" id="PTHR43170:SF5">
    <property type="entry name" value="GMP REDUCTASE"/>
    <property type="match status" value="1"/>
</dbReference>
<dbReference type="Pfam" id="PF00478">
    <property type="entry name" value="IMPDH"/>
    <property type="match status" value="1"/>
</dbReference>
<dbReference type="PIRSF" id="PIRSF000235">
    <property type="entry name" value="GMP_reductase"/>
    <property type="match status" value="1"/>
</dbReference>
<dbReference type="SMART" id="SM01240">
    <property type="entry name" value="IMPDH"/>
    <property type="match status" value="1"/>
</dbReference>
<dbReference type="SUPFAM" id="SSF51412">
    <property type="entry name" value="Inosine monophosphate dehydrogenase (IMPDH)"/>
    <property type="match status" value="1"/>
</dbReference>
<dbReference type="PROSITE" id="PS00487">
    <property type="entry name" value="IMP_DH_GMP_RED"/>
    <property type="match status" value="1"/>
</dbReference>
<comment type="function">
    <text evidence="1">Catalyzes the irreversible NADPH-dependent deamination of GMP to IMP. It functions in the conversion of nucleobase, nucleoside and nucleotide derivatives of G to A nucleotides, and in maintaining the intracellular balance of A and G nucleotides.</text>
</comment>
<comment type="catalytic activity">
    <reaction evidence="1">
        <text>IMP + NH4(+) + NADP(+) = GMP + NADPH + 2 H(+)</text>
        <dbReference type="Rhea" id="RHEA:17185"/>
        <dbReference type="ChEBI" id="CHEBI:15378"/>
        <dbReference type="ChEBI" id="CHEBI:28938"/>
        <dbReference type="ChEBI" id="CHEBI:57783"/>
        <dbReference type="ChEBI" id="CHEBI:58053"/>
        <dbReference type="ChEBI" id="CHEBI:58115"/>
        <dbReference type="ChEBI" id="CHEBI:58349"/>
        <dbReference type="EC" id="1.7.1.7"/>
    </reaction>
</comment>
<comment type="subunit">
    <text evidence="1">Homotetramer.</text>
</comment>
<comment type="similarity">
    <text evidence="1">Belongs to the IMPDH/GMPR family. GuaC type 1 subfamily.</text>
</comment>
<sequence>MRIEEDLKLGFKDVLIRPKRSTLKSRSDVELERQFTFKHSGQTWSGVPIIAANMDTVGTFEMAQALAGFDILTAVHKHYSVEEWAAFINTASADVLKHVMVSTGTSDADFEKTVQILALNPALNFVCIDVANGYSEHFVQFVAKAREAWPSKTICAGNVVTGEMCEELILSGADIVKVGIGPGSVCTTRVKTGVGYPQLSAVIECADAAHGLGGMIVSDGGCTMPGDVAKAFGGGADFVMLGGMLAGHEESGGSVVEENGEKFMLFYGMSSESAMNRHVGGVAKYRAAEGKTVKLPLRGPVGNTARDILGGLRSACTYVGASRLKELTKRTTFIRVQEQENRIFNSL</sequence>
<protein>
    <recommendedName>
        <fullName evidence="1">GMP reductase</fullName>
        <ecNumber evidence="1">1.7.1.7</ecNumber>
    </recommendedName>
    <alternativeName>
        <fullName evidence="1">Guanosine 5'-monophosphate oxidoreductase</fullName>
        <shortName evidence="1">Guanosine monophosphate reductase</shortName>
    </alternativeName>
</protein>